<comment type="function">
    <text evidence="2">Involved in base excision repair of DNA damaged by oxidation or by mutagenic agents. Acts as a DNA glycosylase that recognizes and removes damaged bases. Has a preference for oxidized purines, such as 7,8-dihydro-8-oxoguanine (8-oxoG). Has AP (apurinic/apyrimidinic) lyase activity and introduces nicks in the DNA strand. Cleaves the DNA backbone by beta-delta elimination to generate a single-strand break at the site of the removed base with both 3'- and 5'-phosphates.</text>
</comment>
<comment type="catalytic activity">
    <reaction evidence="2">
        <text>Hydrolysis of DNA containing ring-opened 7-methylguanine residues, releasing 2,6-diamino-4-hydroxy-5-(N-methyl)formamidopyrimidine.</text>
        <dbReference type="EC" id="3.2.2.23"/>
    </reaction>
</comment>
<comment type="catalytic activity">
    <reaction evidence="2">
        <text>2'-deoxyribonucleotide-(2'-deoxyribose 5'-phosphate)-2'-deoxyribonucleotide-DNA = a 3'-end 2'-deoxyribonucleotide-(2,3-dehydro-2,3-deoxyribose 5'-phosphate)-DNA + a 5'-end 5'-phospho-2'-deoxyribonucleoside-DNA + H(+)</text>
        <dbReference type="Rhea" id="RHEA:66592"/>
        <dbReference type="Rhea" id="RHEA-COMP:13180"/>
        <dbReference type="Rhea" id="RHEA-COMP:16897"/>
        <dbReference type="Rhea" id="RHEA-COMP:17067"/>
        <dbReference type="ChEBI" id="CHEBI:15378"/>
        <dbReference type="ChEBI" id="CHEBI:136412"/>
        <dbReference type="ChEBI" id="CHEBI:157695"/>
        <dbReference type="ChEBI" id="CHEBI:167181"/>
        <dbReference type="EC" id="4.2.99.18"/>
    </reaction>
</comment>
<comment type="cofactor">
    <cofactor evidence="2">
        <name>Zn(2+)</name>
        <dbReference type="ChEBI" id="CHEBI:29105"/>
    </cofactor>
    <text evidence="2">Binds 1 zinc ion per subunit.</text>
</comment>
<comment type="subunit">
    <text evidence="2">Monomer.</text>
</comment>
<comment type="similarity">
    <text evidence="2">Belongs to the FPG family.</text>
</comment>
<gene>
    <name evidence="2" type="primary">mutM</name>
    <name evidence="2" type="synonym">fpg</name>
    <name type="ordered locus">Hhal_2311</name>
</gene>
<proteinExistence type="inferred from homology"/>
<organism>
    <name type="scientific">Halorhodospira halophila (strain DSM 244 / SL1)</name>
    <name type="common">Ectothiorhodospira halophila (strain DSM 244 / SL1)</name>
    <dbReference type="NCBI Taxonomy" id="349124"/>
    <lineage>
        <taxon>Bacteria</taxon>
        <taxon>Pseudomonadati</taxon>
        <taxon>Pseudomonadota</taxon>
        <taxon>Gammaproteobacteria</taxon>
        <taxon>Chromatiales</taxon>
        <taxon>Ectothiorhodospiraceae</taxon>
        <taxon>Halorhodospira</taxon>
    </lineage>
</organism>
<name>FPG_HALHL</name>
<evidence type="ECO:0000250" key="1"/>
<evidence type="ECO:0000255" key="2">
    <source>
        <dbReference type="HAMAP-Rule" id="MF_00103"/>
    </source>
</evidence>
<dbReference type="EC" id="3.2.2.23" evidence="2"/>
<dbReference type="EC" id="4.2.99.18" evidence="2"/>
<dbReference type="EMBL" id="CP000544">
    <property type="protein sequence ID" value="ABM63074.1"/>
    <property type="molecule type" value="Genomic_DNA"/>
</dbReference>
<dbReference type="RefSeq" id="WP_011815096.1">
    <property type="nucleotide sequence ID" value="NC_008789.1"/>
</dbReference>
<dbReference type="SMR" id="A1WZG2"/>
<dbReference type="STRING" id="349124.Hhal_2311"/>
<dbReference type="KEGG" id="hha:Hhal_2311"/>
<dbReference type="eggNOG" id="COG0266">
    <property type="taxonomic scope" value="Bacteria"/>
</dbReference>
<dbReference type="HOGENOM" id="CLU_038423_1_1_6"/>
<dbReference type="OrthoDB" id="9800855at2"/>
<dbReference type="Proteomes" id="UP000000647">
    <property type="component" value="Chromosome"/>
</dbReference>
<dbReference type="GO" id="GO:0034039">
    <property type="term" value="F:8-oxo-7,8-dihydroguanine DNA N-glycosylase activity"/>
    <property type="evidence" value="ECO:0007669"/>
    <property type="project" value="TreeGrafter"/>
</dbReference>
<dbReference type="GO" id="GO:0140078">
    <property type="term" value="F:class I DNA-(apurinic or apyrimidinic site) endonuclease activity"/>
    <property type="evidence" value="ECO:0007669"/>
    <property type="project" value="UniProtKB-EC"/>
</dbReference>
<dbReference type="GO" id="GO:0003684">
    <property type="term" value="F:damaged DNA binding"/>
    <property type="evidence" value="ECO:0007669"/>
    <property type="project" value="InterPro"/>
</dbReference>
<dbReference type="GO" id="GO:0008270">
    <property type="term" value="F:zinc ion binding"/>
    <property type="evidence" value="ECO:0007669"/>
    <property type="project" value="UniProtKB-UniRule"/>
</dbReference>
<dbReference type="GO" id="GO:0006284">
    <property type="term" value="P:base-excision repair"/>
    <property type="evidence" value="ECO:0007669"/>
    <property type="project" value="InterPro"/>
</dbReference>
<dbReference type="CDD" id="cd08966">
    <property type="entry name" value="EcFpg-like_N"/>
    <property type="match status" value="1"/>
</dbReference>
<dbReference type="FunFam" id="1.10.8.50:FF:000003">
    <property type="entry name" value="Formamidopyrimidine-DNA glycosylase"/>
    <property type="match status" value="1"/>
</dbReference>
<dbReference type="FunFam" id="3.20.190.10:FF:000001">
    <property type="entry name" value="Formamidopyrimidine-DNA glycosylase"/>
    <property type="match status" value="1"/>
</dbReference>
<dbReference type="Gene3D" id="1.10.8.50">
    <property type="match status" value="1"/>
</dbReference>
<dbReference type="Gene3D" id="3.20.190.10">
    <property type="entry name" value="MutM-like, N-terminal"/>
    <property type="match status" value="1"/>
</dbReference>
<dbReference type="HAMAP" id="MF_00103">
    <property type="entry name" value="Fapy_DNA_glycosyl"/>
    <property type="match status" value="1"/>
</dbReference>
<dbReference type="InterPro" id="IPR015886">
    <property type="entry name" value="DNA_glyclase/AP_lyase_DNA-bd"/>
</dbReference>
<dbReference type="InterPro" id="IPR015887">
    <property type="entry name" value="DNA_glyclase_Znf_dom_DNA_BS"/>
</dbReference>
<dbReference type="InterPro" id="IPR020629">
    <property type="entry name" value="Formamido-pyr_DNA_Glyclase"/>
</dbReference>
<dbReference type="InterPro" id="IPR012319">
    <property type="entry name" value="FPG_cat"/>
</dbReference>
<dbReference type="InterPro" id="IPR035937">
    <property type="entry name" value="MutM-like_N-ter"/>
</dbReference>
<dbReference type="InterPro" id="IPR010979">
    <property type="entry name" value="Ribosomal_uS13-like_H2TH"/>
</dbReference>
<dbReference type="InterPro" id="IPR000214">
    <property type="entry name" value="Znf_DNA_glyclase/AP_lyase"/>
</dbReference>
<dbReference type="InterPro" id="IPR010663">
    <property type="entry name" value="Znf_FPG/IleRS"/>
</dbReference>
<dbReference type="NCBIfam" id="TIGR00577">
    <property type="entry name" value="fpg"/>
    <property type="match status" value="1"/>
</dbReference>
<dbReference type="NCBIfam" id="NF002211">
    <property type="entry name" value="PRK01103.1"/>
    <property type="match status" value="1"/>
</dbReference>
<dbReference type="PANTHER" id="PTHR22993">
    <property type="entry name" value="FORMAMIDOPYRIMIDINE-DNA GLYCOSYLASE"/>
    <property type="match status" value="1"/>
</dbReference>
<dbReference type="PANTHER" id="PTHR22993:SF9">
    <property type="entry name" value="FORMAMIDOPYRIMIDINE-DNA GLYCOSYLASE"/>
    <property type="match status" value="1"/>
</dbReference>
<dbReference type="Pfam" id="PF01149">
    <property type="entry name" value="Fapy_DNA_glyco"/>
    <property type="match status" value="1"/>
</dbReference>
<dbReference type="Pfam" id="PF06831">
    <property type="entry name" value="H2TH"/>
    <property type="match status" value="1"/>
</dbReference>
<dbReference type="Pfam" id="PF06827">
    <property type="entry name" value="zf-FPG_IleRS"/>
    <property type="match status" value="1"/>
</dbReference>
<dbReference type="SMART" id="SM00898">
    <property type="entry name" value="Fapy_DNA_glyco"/>
    <property type="match status" value="1"/>
</dbReference>
<dbReference type="SMART" id="SM01232">
    <property type="entry name" value="H2TH"/>
    <property type="match status" value="1"/>
</dbReference>
<dbReference type="SUPFAM" id="SSF57716">
    <property type="entry name" value="Glucocorticoid receptor-like (DNA-binding domain)"/>
    <property type="match status" value="1"/>
</dbReference>
<dbReference type="SUPFAM" id="SSF81624">
    <property type="entry name" value="N-terminal domain of MutM-like DNA repair proteins"/>
    <property type="match status" value="1"/>
</dbReference>
<dbReference type="SUPFAM" id="SSF46946">
    <property type="entry name" value="S13-like H2TH domain"/>
    <property type="match status" value="1"/>
</dbReference>
<dbReference type="PROSITE" id="PS51068">
    <property type="entry name" value="FPG_CAT"/>
    <property type="match status" value="1"/>
</dbReference>
<dbReference type="PROSITE" id="PS01242">
    <property type="entry name" value="ZF_FPG_1"/>
    <property type="match status" value="1"/>
</dbReference>
<dbReference type="PROSITE" id="PS51066">
    <property type="entry name" value="ZF_FPG_2"/>
    <property type="match status" value="1"/>
</dbReference>
<sequence>MPELPEVETTRRGLQVHLVGRTLQRVVVRQRQLRYPVPARVEAAVVGEEVVALERRAKYLLIRLGGGAWLLLHLGMSGSLRLVAETDAPGRHDHVDLVLNDGRAVRLTDPRRFGCLLLGDGDPQDHRLLRRLGPEPLGSAFDGAVLHRAARGRRVAVKALLMDATVVVGVGNIYANEALFRAGIRPDRAAGRIARARYDRLAGAVRAVLEAALAAGGTTLRDFTDGSGEPGYFAVNLSVYGASVCPVCGGALRQIRLAQRGTWFCPRCQR</sequence>
<protein>
    <recommendedName>
        <fullName evidence="2">Formamidopyrimidine-DNA glycosylase</fullName>
        <shortName evidence="2">Fapy-DNA glycosylase</shortName>
        <ecNumber evidence="2">3.2.2.23</ecNumber>
    </recommendedName>
    <alternativeName>
        <fullName evidence="2">DNA-(apurinic or apyrimidinic site) lyase MutM</fullName>
        <shortName evidence="2">AP lyase MutM</shortName>
        <ecNumber evidence="2">4.2.99.18</ecNumber>
    </alternativeName>
</protein>
<accession>A1WZG2</accession>
<reference key="1">
    <citation type="submission" date="2006-12" db="EMBL/GenBank/DDBJ databases">
        <title>Complete sequence of Halorhodospira halophila SL1.</title>
        <authorList>
            <consortium name="US DOE Joint Genome Institute"/>
            <person name="Copeland A."/>
            <person name="Lucas S."/>
            <person name="Lapidus A."/>
            <person name="Barry K."/>
            <person name="Detter J.C."/>
            <person name="Glavina del Rio T."/>
            <person name="Hammon N."/>
            <person name="Israni S."/>
            <person name="Dalin E."/>
            <person name="Tice H."/>
            <person name="Pitluck S."/>
            <person name="Saunders E."/>
            <person name="Brettin T."/>
            <person name="Bruce D."/>
            <person name="Han C."/>
            <person name="Tapia R."/>
            <person name="Schmutz J."/>
            <person name="Larimer F."/>
            <person name="Land M."/>
            <person name="Hauser L."/>
            <person name="Kyrpides N."/>
            <person name="Mikhailova N."/>
            <person name="Hoff W."/>
            <person name="Richardson P."/>
        </authorList>
    </citation>
    <scope>NUCLEOTIDE SEQUENCE [LARGE SCALE GENOMIC DNA]</scope>
    <source>
        <strain>DSM 244 / SL1</strain>
    </source>
</reference>
<keyword id="KW-0227">DNA damage</keyword>
<keyword id="KW-0234">DNA repair</keyword>
<keyword id="KW-0238">DNA-binding</keyword>
<keyword id="KW-0326">Glycosidase</keyword>
<keyword id="KW-0378">Hydrolase</keyword>
<keyword id="KW-0456">Lyase</keyword>
<keyword id="KW-0479">Metal-binding</keyword>
<keyword id="KW-0511">Multifunctional enzyme</keyword>
<keyword id="KW-1185">Reference proteome</keyword>
<keyword id="KW-0862">Zinc</keyword>
<keyword id="KW-0863">Zinc-finger</keyword>
<feature type="initiator methionine" description="Removed" evidence="1">
    <location>
        <position position="1"/>
    </location>
</feature>
<feature type="chain" id="PRO_1000008703" description="Formamidopyrimidine-DNA glycosylase">
    <location>
        <begin position="2"/>
        <end position="270"/>
    </location>
</feature>
<feature type="zinc finger region" description="FPG-type" evidence="2">
    <location>
        <begin position="238"/>
        <end position="270"/>
    </location>
</feature>
<feature type="active site" description="Schiff-base intermediate with DNA" evidence="2">
    <location>
        <position position="2"/>
    </location>
</feature>
<feature type="active site" description="Proton donor" evidence="2">
    <location>
        <position position="3"/>
    </location>
</feature>
<feature type="active site" description="Proton donor; for beta-elimination activity" evidence="2">
    <location>
        <position position="58"/>
    </location>
</feature>
<feature type="active site" description="Proton donor; for delta-elimination activity" evidence="2">
    <location>
        <position position="260"/>
    </location>
</feature>
<feature type="binding site" evidence="2">
    <location>
        <position position="92"/>
    </location>
    <ligand>
        <name>DNA</name>
        <dbReference type="ChEBI" id="CHEBI:16991"/>
    </ligand>
</feature>
<feature type="binding site" evidence="2">
    <location>
        <position position="111"/>
    </location>
    <ligand>
        <name>DNA</name>
        <dbReference type="ChEBI" id="CHEBI:16991"/>
    </ligand>
</feature>
<feature type="binding site" evidence="2">
    <location>
        <position position="153"/>
    </location>
    <ligand>
        <name>DNA</name>
        <dbReference type="ChEBI" id="CHEBI:16991"/>
    </ligand>
</feature>